<name>RL29_METBF</name>
<comment type="similarity">
    <text evidence="1">Belongs to the universal ribosomal protein uL29 family.</text>
</comment>
<protein>
    <recommendedName>
        <fullName evidence="1">Large ribosomal subunit protein uL29</fullName>
    </recommendedName>
    <alternativeName>
        <fullName evidence="2">50S ribosomal protein L29</fullName>
    </alternativeName>
</protein>
<organism>
    <name type="scientific">Methanosarcina barkeri (strain Fusaro / DSM 804)</name>
    <dbReference type="NCBI Taxonomy" id="269797"/>
    <lineage>
        <taxon>Archaea</taxon>
        <taxon>Methanobacteriati</taxon>
        <taxon>Methanobacteriota</taxon>
        <taxon>Stenosarchaea group</taxon>
        <taxon>Methanomicrobia</taxon>
        <taxon>Methanosarcinales</taxon>
        <taxon>Methanosarcinaceae</taxon>
        <taxon>Methanosarcina</taxon>
    </lineage>
</organism>
<dbReference type="EMBL" id="CP000099">
    <property type="protein sequence ID" value="AAZ69090.1"/>
    <property type="molecule type" value="Genomic_DNA"/>
</dbReference>
<dbReference type="SMR" id="Q46GA2"/>
<dbReference type="STRING" id="269797.Mbar_A0103"/>
<dbReference type="PaxDb" id="269797-Mbar_A0103"/>
<dbReference type="KEGG" id="mba:Mbar_A0103"/>
<dbReference type="eggNOG" id="arCOG00785">
    <property type="taxonomic scope" value="Archaea"/>
</dbReference>
<dbReference type="HOGENOM" id="CLU_158491_2_2_2"/>
<dbReference type="OrthoDB" id="11736at2157"/>
<dbReference type="GO" id="GO:1990904">
    <property type="term" value="C:ribonucleoprotein complex"/>
    <property type="evidence" value="ECO:0007669"/>
    <property type="project" value="UniProtKB-KW"/>
</dbReference>
<dbReference type="GO" id="GO:0005840">
    <property type="term" value="C:ribosome"/>
    <property type="evidence" value="ECO:0007669"/>
    <property type="project" value="UniProtKB-KW"/>
</dbReference>
<dbReference type="GO" id="GO:0003735">
    <property type="term" value="F:structural constituent of ribosome"/>
    <property type="evidence" value="ECO:0007669"/>
    <property type="project" value="InterPro"/>
</dbReference>
<dbReference type="GO" id="GO:0006412">
    <property type="term" value="P:translation"/>
    <property type="evidence" value="ECO:0007669"/>
    <property type="project" value="UniProtKB-UniRule"/>
</dbReference>
<dbReference type="CDD" id="cd00427">
    <property type="entry name" value="Ribosomal_L29_HIP"/>
    <property type="match status" value="1"/>
</dbReference>
<dbReference type="Gene3D" id="1.10.287.310">
    <property type="match status" value="1"/>
</dbReference>
<dbReference type="HAMAP" id="MF_00374">
    <property type="entry name" value="Ribosomal_uL29"/>
    <property type="match status" value="1"/>
</dbReference>
<dbReference type="InterPro" id="IPR001854">
    <property type="entry name" value="Ribosomal_uL29"/>
</dbReference>
<dbReference type="InterPro" id="IPR018254">
    <property type="entry name" value="Ribosomal_uL29_CS"/>
</dbReference>
<dbReference type="InterPro" id="IPR036049">
    <property type="entry name" value="Ribosomal_uL29_sf"/>
</dbReference>
<dbReference type="NCBIfam" id="TIGR00012">
    <property type="entry name" value="L29"/>
    <property type="match status" value="1"/>
</dbReference>
<dbReference type="Pfam" id="PF00831">
    <property type="entry name" value="Ribosomal_L29"/>
    <property type="match status" value="1"/>
</dbReference>
<dbReference type="SUPFAM" id="SSF46561">
    <property type="entry name" value="Ribosomal protein L29 (L29p)"/>
    <property type="match status" value="1"/>
</dbReference>
<dbReference type="PROSITE" id="PS00579">
    <property type="entry name" value="RIBOSOMAL_L29"/>
    <property type="match status" value="1"/>
</dbReference>
<accession>Q46GA2</accession>
<gene>
    <name evidence="1" type="primary">rpl29</name>
    <name type="ordered locus">Mbar_A0103</name>
</gene>
<evidence type="ECO:0000255" key="1">
    <source>
        <dbReference type="HAMAP-Rule" id="MF_00374"/>
    </source>
</evidence>
<evidence type="ECO:0000305" key="2"/>
<sequence length="67" mass="7640">MAILRSREIRDMSLEERADELENLNSELVRERALTSAGGAPENPGRIGEIRRTIARIKTIQHELNEI</sequence>
<keyword id="KW-0687">Ribonucleoprotein</keyword>
<keyword id="KW-0689">Ribosomal protein</keyword>
<feature type="chain" id="PRO_1000007518" description="Large ribosomal subunit protein uL29">
    <location>
        <begin position="1"/>
        <end position="67"/>
    </location>
</feature>
<proteinExistence type="inferred from homology"/>
<reference key="1">
    <citation type="journal article" date="2006" name="J. Bacteriol.">
        <title>The Methanosarcina barkeri genome: comparative analysis with Methanosarcina acetivorans and Methanosarcina mazei reveals extensive rearrangement within methanosarcinal genomes.</title>
        <authorList>
            <person name="Maeder D.L."/>
            <person name="Anderson I."/>
            <person name="Brettin T.S."/>
            <person name="Bruce D.C."/>
            <person name="Gilna P."/>
            <person name="Han C.S."/>
            <person name="Lapidus A."/>
            <person name="Metcalf W.W."/>
            <person name="Saunders E."/>
            <person name="Tapia R."/>
            <person name="Sowers K.R."/>
        </authorList>
    </citation>
    <scope>NUCLEOTIDE SEQUENCE [LARGE SCALE GENOMIC DNA]</scope>
    <source>
        <strain>Fusaro / DSM 804</strain>
    </source>
</reference>